<sequence>MEILTTTFLSLGLAADAFAVSLTSGFSIKHIKLNKALKIALFFGCFQAIMPFIGWSAGLTFRDFISSFDHWIAFGLLSYIGGKMIYESMEEEKEDKKFNPLDSYTLTTLAIATSIDALAAGIGLSVLKGSILLACTLIGFITFGLCFIGVFIGHRFGDILNQKIEIVGGVVLILIGTKILLEHLGFSLV</sequence>
<feature type="chain" id="PRO_1000200017" description="Putative manganese efflux pump MntP">
    <location>
        <begin position="1"/>
        <end position="189"/>
    </location>
</feature>
<feature type="transmembrane region" description="Helical" evidence="1">
    <location>
        <begin position="8"/>
        <end position="28"/>
    </location>
</feature>
<feature type="transmembrane region" description="Helical" evidence="1">
    <location>
        <begin position="39"/>
        <end position="59"/>
    </location>
</feature>
<feature type="transmembrane region" description="Helical" evidence="1">
    <location>
        <begin position="65"/>
        <end position="85"/>
    </location>
</feature>
<feature type="transmembrane region" description="Helical" evidence="1">
    <location>
        <begin position="106"/>
        <end position="126"/>
    </location>
</feature>
<feature type="transmembrane region" description="Helical" evidence="1">
    <location>
        <begin position="131"/>
        <end position="151"/>
    </location>
</feature>
<feature type="transmembrane region" description="Helical" evidence="1">
    <location>
        <begin position="166"/>
        <end position="186"/>
    </location>
</feature>
<proteinExistence type="inferred from homology"/>
<reference key="1">
    <citation type="journal article" date="2011" name="MBio">
        <title>Novel metabolic attributes of the genus Cyanothece, comprising a group of unicellular nitrogen-fixing Cyanobacteria.</title>
        <authorList>
            <person name="Bandyopadhyay A."/>
            <person name="Elvitigala T."/>
            <person name="Welsh E."/>
            <person name="Stockel J."/>
            <person name="Liberton M."/>
            <person name="Min H."/>
            <person name="Sherman L.A."/>
            <person name="Pakrasi H.B."/>
        </authorList>
    </citation>
    <scope>NUCLEOTIDE SEQUENCE [LARGE SCALE GENOMIC DNA]</scope>
    <source>
        <strain>PCC 7424</strain>
    </source>
</reference>
<comment type="function">
    <text evidence="1">Probably functions as a manganese efflux pump.</text>
</comment>
<comment type="subcellular location">
    <subcellularLocation>
        <location evidence="1">Cell inner membrane</location>
        <topology evidence="1">Multi-pass membrane protein</topology>
    </subcellularLocation>
</comment>
<comment type="similarity">
    <text evidence="1">Belongs to the MntP (TC 9.B.29) family.</text>
</comment>
<organism>
    <name type="scientific">Gloeothece citriformis (strain PCC 7424)</name>
    <name type="common">Cyanothece sp. (strain PCC 7424)</name>
    <dbReference type="NCBI Taxonomy" id="65393"/>
    <lineage>
        <taxon>Bacteria</taxon>
        <taxon>Bacillati</taxon>
        <taxon>Cyanobacteriota</taxon>
        <taxon>Cyanophyceae</taxon>
        <taxon>Oscillatoriophycideae</taxon>
        <taxon>Chroococcales</taxon>
        <taxon>Aphanothecaceae</taxon>
        <taxon>Gloeothece</taxon>
        <taxon>Gloeothece citriformis</taxon>
    </lineage>
</organism>
<protein>
    <recommendedName>
        <fullName evidence="1">Putative manganese efflux pump MntP</fullName>
    </recommendedName>
</protein>
<gene>
    <name evidence="1" type="primary">mntP</name>
    <name type="ordered locus">PCC7424_2187</name>
</gene>
<accession>B7KGD8</accession>
<evidence type="ECO:0000255" key="1">
    <source>
        <dbReference type="HAMAP-Rule" id="MF_01521"/>
    </source>
</evidence>
<name>MNTP_GLOC7</name>
<dbReference type="EMBL" id="CP001291">
    <property type="protein sequence ID" value="ACK70609.1"/>
    <property type="molecule type" value="Genomic_DNA"/>
</dbReference>
<dbReference type="RefSeq" id="WP_015954215.1">
    <property type="nucleotide sequence ID" value="NC_011729.1"/>
</dbReference>
<dbReference type="STRING" id="65393.PCC7424_2187"/>
<dbReference type="KEGG" id="cyc:PCC7424_2187"/>
<dbReference type="eggNOG" id="COG1971">
    <property type="taxonomic scope" value="Bacteria"/>
</dbReference>
<dbReference type="HOGENOM" id="CLU_096410_3_0_3"/>
<dbReference type="OrthoDB" id="9811590at2"/>
<dbReference type="Proteomes" id="UP000002384">
    <property type="component" value="Chromosome"/>
</dbReference>
<dbReference type="GO" id="GO:0005886">
    <property type="term" value="C:plasma membrane"/>
    <property type="evidence" value="ECO:0007669"/>
    <property type="project" value="UniProtKB-SubCell"/>
</dbReference>
<dbReference type="GO" id="GO:0005384">
    <property type="term" value="F:manganese ion transmembrane transporter activity"/>
    <property type="evidence" value="ECO:0007669"/>
    <property type="project" value="UniProtKB-UniRule"/>
</dbReference>
<dbReference type="HAMAP" id="MF_01521">
    <property type="entry name" value="MntP_pump"/>
    <property type="match status" value="1"/>
</dbReference>
<dbReference type="InterPro" id="IPR003810">
    <property type="entry name" value="Mntp/YtaF"/>
</dbReference>
<dbReference type="InterPro" id="IPR022929">
    <property type="entry name" value="Put_MntP"/>
</dbReference>
<dbReference type="PANTHER" id="PTHR35529">
    <property type="entry name" value="MANGANESE EFFLUX PUMP MNTP-RELATED"/>
    <property type="match status" value="1"/>
</dbReference>
<dbReference type="PANTHER" id="PTHR35529:SF1">
    <property type="entry name" value="MANGANESE EFFLUX PUMP MNTP-RELATED"/>
    <property type="match status" value="1"/>
</dbReference>
<dbReference type="Pfam" id="PF02659">
    <property type="entry name" value="Mntp"/>
    <property type="match status" value="1"/>
</dbReference>
<keyword id="KW-0997">Cell inner membrane</keyword>
<keyword id="KW-1003">Cell membrane</keyword>
<keyword id="KW-0406">Ion transport</keyword>
<keyword id="KW-0464">Manganese</keyword>
<keyword id="KW-0472">Membrane</keyword>
<keyword id="KW-1185">Reference proteome</keyword>
<keyword id="KW-0812">Transmembrane</keyword>
<keyword id="KW-1133">Transmembrane helix</keyword>
<keyword id="KW-0813">Transport</keyword>